<comment type="function">
    <text evidence="1">Plays an important role in growth control. Its major role in stimulating body growth is to stimulate the liver and other tissues to secrete IGF1. It stimulates both the differentiation and proliferation of myoblasts. It also stimulates amino acid uptake and protein synthesis in muscle and other tissues (By similarity).</text>
</comment>
<comment type="subcellular location">
    <subcellularLocation>
        <location>Secreted</location>
    </subcellularLocation>
</comment>
<comment type="similarity">
    <text evidence="3">Belongs to the somatotropin/prolactin family.</text>
</comment>
<gene>
    <name type="primary">GH1</name>
</gene>
<organism>
    <name type="scientific">Saimiri boliviensis boliviensis</name>
    <name type="common">Bolivian squirrel monkey</name>
    <dbReference type="NCBI Taxonomy" id="39432"/>
    <lineage>
        <taxon>Eukaryota</taxon>
        <taxon>Metazoa</taxon>
        <taxon>Chordata</taxon>
        <taxon>Craniata</taxon>
        <taxon>Vertebrata</taxon>
        <taxon>Euteleostomi</taxon>
        <taxon>Mammalia</taxon>
        <taxon>Eutheria</taxon>
        <taxon>Euarchontoglires</taxon>
        <taxon>Primates</taxon>
        <taxon>Haplorrhini</taxon>
        <taxon>Platyrrhini</taxon>
        <taxon>Cebidae</taxon>
        <taxon>Saimiriinae</taxon>
        <taxon>Saimiri</taxon>
    </lineage>
</organism>
<proteinExistence type="evidence at transcript level"/>
<protein>
    <recommendedName>
        <fullName>Somatotropin</fullName>
    </recommendedName>
    <alternativeName>
        <fullName>Growth hormone</fullName>
    </alternativeName>
</protein>
<keyword id="KW-1015">Disulfide bond</keyword>
<keyword id="KW-0372">Hormone</keyword>
<keyword id="KW-0479">Metal-binding</keyword>
<keyword id="KW-0597">Phosphoprotein</keyword>
<keyword id="KW-1185">Reference proteome</keyword>
<keyword id="KW-0964">Secreted</keyword>
<keyword id="KW-0732">Signal</keyword>
<keyword id="KW-0862">Zinc</keyword>
<evidence type="ECO:0000250" key="1"/>
<evidence type="ECO:0000250" key="2">
    <source>
        <dbReference type="UniProtKB" id="P01241"/>
    </source>
</evidence>
<evidence type="ECO:0000305" key="3"/>
<name>SOMA_SAIBB</name>
<sequence>MATGSRTSLLLAFTLLCLPQLKEAGAFPTIPLSRLLDNAMLRAHRLHQLAFDTYQEFEEAYIPKEQKYSFLQNPQTSLCFSESIPTPASKKETQQKSNLELLRISLILIQSWFEPVQLLRSVFANSLLYGVSDSDVYEYLKDLEEGIQTLMERLEDGSPRTGAIFRQTYSKFDINSQNDDALLKNYGLLYCFRKDMDKVETFLRIVQCRSVEGSCGF</sequence>
<feature type="signal peptide" evidence="1">
    <location>
        <begin position="1"/>
        <end position="26"/>
    </location>
</feature>
<feature type="chain" id="PRO_0000032999" description="Somatotropin">
    <location>
        <begin position="27"/>
        <end position="217"/>
    </location>
</feature>
<feature type="binding site" evidence="1">
    <location>
        <position position="44"/>
    </location>
    <ligand>
        <name>Zn(2+)</name>
        <dbReference type="ChEBI" id="CHEBI:29105"/>
    </ligand>
</feature>
<feature type="binding site" evidence="1">
    <location>
        <position position="200"/>
    </location>
    <ligand>
        <name>Zn(2+)</name>
        <dbReference type="ChEBI" id="CHEBI:29105"/>
    </ligand>
</feature>
<feature type="modified residue" description="Phosphoserine" evidence="2">
    <location>
        <position position="132"/>
    </location>
</feature>
<feature type="disulfide bond" evidence="1">
    <location>
        <begin position="79"/>
        <end position="191"/>
    </location>
</feature>
<feature type="disulfide bond" evidence="1">
    <location>
        <begin position="208"/>
        <end position="215"/>
    </location>
</feature>
<accession>P58343</accession>
<reference key="1">
    <citation type="journal article" date="2001" name="Mol. Biol. Evol.">
        <title>Episodic evolution of growth hormone in primates and emergence of the species specificity of human growth hormone receptor.</title>
        <authorList>
            <person name="Liu J.-C."/>
            <person name="Makova K.D."/>
            <person name="Adkins R.M."/>
            <person name="Gibson S."/>
            <person name="Li W.-H."/>
        </authorList>
    </citation>
    <scope>NUCLEOTIDE SEQUENCE [MRNA]</scope>
</reference>
<dbReference type="EMBL" id="AF339060">
    <property type="protein sequence ID" value="AAK62287.1"/>
    <property type="molecule type" value="mRNA"/>
</dbReference>
<dbReference type="RefSeq" id="NP_001266907.1">
    <property type="nucleotide sequence ID" value="NM_001279978.1"/>
</dbReference>
<dbReference type="SMR" id="P58343"/>
<dbReference type="STRING" id="39432.ENSSBOP00000016551"/>
<dbReference type="GeneID" id="101039453"/>
<dbReference type="CTD" id="2688"/>
<dbReference type="Proteomes" id="UP000233220">
    <property type="component" value="Whole Genome Shotgun Assembly"/>
</dbReference>
<dbReference type="GO" id="GO:0005615">
    <property type="term" value="C:extracellular space"/>
    <property type="evidence" value="ECO:0007669"/>
    <property type="project" value="InterPro"/>
</dbReference>
<dbReference type="GO" id="GO:0008083">
    <property type="term" value="F:growth factor activity"/>
    <property type="evidence" value="ECO:0007669"/>
    <property type="project" value="TreeGrafter"/>
</dbReference>
<dbReference type="GO" id="GO:0005131">
    <property type="term" value="F:growth hormone receptor binding"/>
    <property type="evidence" value="ECO:0007669"/>
    <property type="project" value="InterPro"/>
</dbReference>
<dbReference type="GO" id="GO:0005179">
    <property type="term" value="F:hormone activity"/>
    <property type="evidence" value="ECO:0007669"/>
    <property type="project" value="UniProtKB-KW"/>
</dbReference>
<dbReference type="GO" id="GO:0046872">
    <property type="term" value="F:metal ion binding"/>
    <property type="evidence" value="ECO:0007669"/>
    <property type="project" value="UniProtKB-KW"/>
</dbReference>
<dbReference type="GO" id="GO:0048513">
    <property type="term" value="P:animal organ development"/>
    <property type="evidence" value="ECO:0007669"/>
    <property type="project" value="TreeGrafter"/>
</dbReference>
<dbReference type="GO" id="GO:0060396">
    <property type="term" value="P:growth hormone receptor signaling pathway"/>
    <property type="evidence" value="ECO:0007669"/>
    <property type="project" value="TreeGrafter"/>
</dbReference>
<dbReference type="GO" id="GO:0045927">
    <property type="term" value="P:positive regulation of growth"/>
    <property type="evidence" value="ECO:0007669"/>
    <property type="project" value="TreeGrafter"/>
</dbReference>
<dbReference type="GO" id="GO:0046427">
    <property type="term" value="P:positive regulation of receptor signaling pathway via JAK-STAT"/>
    <property type="evidence" value="ECO:0007669"/>
    <property type="project" value="TreeGrafter"/>
</dbReference>
<dbReference type="GO" id="GO:0031667">
    <property type="term" value="P:response to nutrient levels"/>
    <property type="evidence" value="ECO:0007669"/>
    <property type="project" value="TreeGrafter"/>
</dbReference>
<dbReference type="CDD" id="cd10285">
    <property type="entry name" value="somatotropin_like"/>
    <property type="match status" value="1"/>
</dbReference>
<dbReference type="FunFam" id="1.20.1250.10:FF:000012">
    <property type="entry name" value="Growth hormone 1"/>
    <property type="match status" value="1"/>
</dbReference>
<dbReference type="Gene3D" id="1.20.1250.10">
    <property type="match status" value="1"/>
</dbReference>
<dbReference type="InterPro" id="IPR009079">
    <property type="entry name" value="4_helix_cytokine-like_core"/>
</dbReference>
<dbReference type="InterPro" id="IPR034975">
    <property type="entry name" value="Somatotropin"/>
</dbReference>
<dbReference type="InterPro" id="IPR001400">
    <property type="entry name" value="Somatotropin/Prolactin"/>
</dbReference>
<dbReference type="InterPro" id="IPR018116">
    <property type="entry name" value="Somatotropin_CS"/>
</dbReference>
<dbReference type="PANTHER" id="PTHR11417:SF2">
    <property type="entry name" value="SOMATOTROPIN"/>
    <property type="match status" value="1"/>
</dbReference>
<dbReference type="PANTHER" id="PTHR11417">
    <property type="entry name" value="SOMATOTROPIN,PROLACTIN"/>
    <property type="match status" value="1"/>
</dbReference>
<dbReference type="Pfam" id="PF00103">
    <property type="entry name" value="Hormone_1"/>
    <property type="match status" value="1"/>
</dbReference>
<dbReference type="PRINTS" id="PR00836">
    <property type="entry name" value="SOMATOTROPIN"/>
</dbReference>
<dbReference type="SUPFAM" id="SSF47266">
    <property type="entry name" value="4-helical cytokines"/>
    <property type="match status" value="1"/>
</dbReference>
<dbReference type="PROSITE" id="PS00266">
    <property type="entry name" value="SOMATOTROPIN_1"/>
    <property type="match status" value="1"/>
</dbReference>
<dbReference type="PROSITE" id="PS00338">
    <property type="entry name" value="SOMATOTROPIN_2"/>
    <property type="match status" value="1"/>
</dbReference>